<sequence length="529" mass="59172">MSPHVDMSSGSPDGAAPAVQKAFNGFLTENIDESQFPALENRSHLRYTPQDELHDMICVGFGPASLAIGVALHDALDGTDGSLADVQGLQSRPPKVAFLEKQPQFAWHAGMLLPGAKMQITFMKDMATMRNPRSEFTFLNYLHQKDRLVEFANLNTFLPARVEYEDYMKWCASWFEEVVAYSQEVVKVMPEKSASGEITSFNVMSHNHLTGRTESRRAKHVVIAAGGRPNIPAPFPTNHPRVIHSSQFSYMSKQLLKDHDAPYNIAVVGNGQSAAEIFDFLHANYPNSRTRLLIKGGALRPSDDSPFVNEIFNPSRTDCTYNRAPKLRATTLVEDKGTNYGVVRLGLLEHIYETLYMQRIRYGNSPAEEAHWPHRILPYRRVMDVTESPVCQGGVRLHVQDSSALYFSEQAGGQERKETLDVDAVFVATGYLRDLHETLLKDARHLMPGGELEGAKWQVQRDYRVNFTEKSVGEDAGVWLQGCCESTHGLSDTLLSVLATRGGEMVRSLFEKPAKWDNGHVLGGYEVRE</sequence>
<dbReference type="EC" id="1.14.13.196" evidence="5"/>
<dbReference type="EMBL" id="KB733486">
    <property type="protein sequence ID" value="ENH99440.1"/>
    <property type="molecule type" value="Genomic_DNA"/>
</dbReference>
<dbReference type="RefSeq" id="XP_014073320.1">
    <property type="nucleotide sequence ID" value="XM_014217845.1"/>
</dbReference>
<dbReference type="SMR" id="N4WYI1"/>
<dbReference type="HOGENOM" id="CLU_020931_2_0_1"/>
<dbReference type="OrthoDB" id="3519933at2759"/>
<dbReference type="Proteomes" id="UP000012338">
    <property type="component" value="Unassembled WGS sequence"/>
</dbReference>
<dbReference type="GO" id="GO:0031172">
    <property type="term" value="F:ornithine N5-monooxygenase activity"/>
    <property type="evidence" value="ECO:0007669"/>
    <property type="project" value="RHEA"/>
</dbReference>
<dbReference type="GO" id="GO:0009058">
    <property type="term" value="P:biosynthetic process"/>
    <property type="evidence" value="ECO:0007669"/>
    <property type="project" value="UniProtKB-ARBA"/>
</dbReference>
<dbReference type="GO" id="GO:0006879">
    <property type="term" value="P:intracellular iron ion homeostasis"/>
    <property type="evidence" value="ECO:0007669"/>
    <property type="project" value="TreeGrafter"/>
</dbReference>
<dbReference type="FunFam" id="3.50.50.60:FF:000195">
    <property type="entry name" value="L-ornithine N(5)-monooxygenase"/>
    <property type="match status" value="1"/>
</dbReference>
<dbReference type="Gene3D" id="3.50.50.60">
    <property type="entry name" value="FAD/NAD(P)-binding domain"/>
    <property type="match status" value="1"/>
</dbReference>
<dbReference type="InterPro" id="IPR036188">
    <property type="entry name" value="FAD/NAD-bd_sf"/>
</dbReference>
<dbReference type="InterPro" id="IPR025700">
    <property type="entry name" value="Lys/Orn_oxygenase"/>
</dbReference>
<dbReference type="PANTHER" id="PTHR42802:SF1">
    <property type="entry name" value="L-ORNITHINE N(5)-MONOOXYGENASE"/>
    <property type="match status" value="1"/>
</dbReference>
<dbReference type="PANTHER" id="PTHR42802">
    <property type="entry name" value="MONOOXYGENASE"/>
    <property type="match status" value="1"/>
</dbReference>
<dbReference type="Pfam" id="PF13434">
    <property type="entry name" value="Lys_Orn_oxgnase"/>
    <property type="match status" value="1"/>
</dbReference>
<dbReference type="PRINTS" id="PR00368">
    <property type="entry name" value="FADPNR"/>
</dbReference>
<dbReference type="SUPFAM" id="SSF51905">
    <property type="entry name" value="FAD/NAD(P)-binding domain"/>
    <property type="match status" value="1"/>
</dbReference>
<evidence type="ECO:0000250" key="1">
    <source>
        <dbReference type="UniProtKB" id="E9QYP0"/>
    </source>
</evidence>
<evidence type="ECO:0000250" key="2">
    <source>
        <dbReference type="UniProtKB" id="G5EB76"/>
    </source>
</evidence>
<evidence type="ECO:0000269" key="3">
    <source>
    </source>
</evidence>
<evidence type="ECO:0000269" key="4">
    <source>
    </source>
</evidence>
<evidence type="ECO:0000269" key="5">
    <source>
    </source>
</evidence>
<evidence type="ECO:0000303" key="6">
    <source>
    </source>
</evidence>
<evidence type="ECO:0000305" key="7"/>
<evidence type="ECO:0000305" key="8">
    <source>
    </source>
</evidence>
<accession>N4WYI1</accession>
<reference key="1">
    <citation type="journal article" date="2012" name="PLoS Pathog.">
        <title>Diverse lifestyles and strategies of plant pathogenesis encoded in the genomes of eighteen Dothideomycetes fungi.</title>
        <authorList>
            <person name="Ohm R.A."/>
            <person name="Feau N."/>
            <person name="Henrissat B."/>
            <person name="Schoch C.L."/>
            <person name="Horwitz B.A."/>
            <person name="Barry K.W."/>
            <person name="Condon B.J."/>
            <person name="Copeland A.C."/>
            <person name="Dhillon B."/>
            <person name="Glaser F."/>
            <person name="Hesse C.N."/>
            <person name="Kosti I."/>
            <person name="LaButti K."/>
            <person name="Lindquist E.A."/>
            <person name="Lucas S."/>
            <person name="Salamov A.A."/>
            <person name="Bradshaw R.E."/>
            <person name="Ciuffetti L."/>
            <person name="Hamelin R.C."/>
            <person name="Kema G.H.J."/>
            <person name="Lawrence C."/>
            <person name="Scott J.A."/>
            <person name="Spatafora J.W."/>
            <person name="Turgeon B.G."/>
            <person name="de Wit P.J.G.M."/>
            <person name="Zhong S."/>
            <person name="Goodwin S.B."/>
            <person name="Grigoriev I.V."/>
        </authorList>
    </citation>
    <scope>NUCLEOTIDE SEQUENCE [LARGE SCALE GENOMIC DNA]</scope>
    <source>
        <strain>C4 / ATCC 48331 / race T</strain>
    </source>
</reference>
<reference key="2">
    <citation type="journal article" date="2013" name="PLoS Genet.">
        <title>Comparative genome structure, secondary metabolite, and effector coding capacity across Cochliobolus pathogens.</title>
        <authorList>
            <person name="Condon B.J."/>
            <person name="Leng Y."/>
            <person name="Wu D."/>
            <person name="Bushley K.E."/>
            <person name="Ohm R.A."/>
            <person name="Otillar R."/>
            <person name="Martin J."/>
            <person name="Schackwitz W."/>
            <person name="Grimwood J."/>
            <person name="MohdZainudin N."/>
            <person name="Xue C."/>
            <person name="Wang R."/>
            <person name="Manning V.A."/>
            <person name="Dhillon B."/>
            <person name="Tu Z.J."/>
            <person name="Steffenson B.J."/>
            <person name="Salamov A."/>
            <person name="Sun H."/>
            <person name="Lowry S."/>
            <person name="LaButti K."/>
            <person name="Han J."/>
            <person name="Copeland A."/>
            <person name="Lindquist E."/>
            <person name="Barry K."/>
            <person name="Schmutz J."/>
            <person name="Baker S.E."/>
            <person name="Ciuffetti L.M."/>
            <person name="Grigoriev I.V."/>
            <person name="Zhong S."/>
            <person name="Turgeon B.G."/>
        </authorList>
    </citation>
    <scope>NUCLEOTIDE SEQUENCE [LARGE SCALE GENOMIC DNA]</scope>
    <source>
        <strain>C4 / ATCC 48331 / race T</strain>
    </source>
</reference>
<reference key="3">
    <citation type="journal article" date="2006" name="Plant Cell">
        <title>NPS6, encoding a nonribosomal peptide synthetase involved in siderophore-mediated iron metabolism, is a conserved virulence determinant of plant pathogenic ascomycetes.</title>
        <authorList>
            <person name="Oide S."/>
            <person name="Moeder W."/>
            <person name="Krasnoff S."/>
            <person name="Gibson D."/>
            <person name="Haas H."/>
            <person name="Yoshioka K."/>
            <person name="Turgeon B.G."/>
        </authorList>
    </citation>
    <scope>FUNCTION</scope>
</reference>
<reference key="4">
    <citation type="journal article" date="2007" name="Eukaryot. Cell">
        <title>Intracellular siderophores are essential for ascomycete sexual development in heterothallic Cochliobolus heterostrophus and homothallic Gibberella zeae.</title>
        <authorList>
            <person name="Oide S."/>
            <person name="Krasnoff S.B."/>
            <person name="Gibson D.M."/>
            <person name="Turgeon B.G."/>
        </authorList>
    </citation>
    <scope>FUNCTION</scope>
</reference>
<reference key="5">
    <citation type="journal article" date="2013" name="Mol. Plant Microbe Interact.">
        <title>Iron, oxidative stress, and virulence: roles of iron-sensitive transcription factor Sre1 and the redox sensor ChAp1 in the maize pathogen Cochliobolus heterostrophus.</title>
        <authorList>
            <person name="Zhang N."/>
            <person name="MohdZainudin N.A."/>
            <person name="Scher K."/>
            <person name="Condon B.J."/>
            <person name="Horwitz B.A."/>
            <person name="Turgeon B.G."/>
        </authorList>
    </citation>
    <scope>FUNCTION</scope>
    <scope>INDUCTION</scope>
</reference>
<proteinExistence type="evidence at transcript level"/>
<gene>
    <name evidence="6" type="primary">SIDA2</name>
    <name type="ORF">COCC4DRAFT_34841</name>
</gene>
<organism>
    <name type="scientific">Cochliobolus heterostrophus (strain C4 / ATCC 48331 / race T)</name>
    <name type="common">Southern corn leaf blight fungus</name>
    <name type="synonym">Bipolaris maydis</name>
    <dbReference type="NCBI Taxonomy" id="665024"/>
    <lineage>
        <taxon>Eukaryota</taxon>
        <taxon>Fungi</taxon>
        <taxon>Dikarya</taxon>
        <taxon>Ascomycota</taxon>
        <taxon>Pezizomycotina</taxon>
        <taxon>Dothideomycetes</taxon>
        <taxon>Pleosporomycetidae</taxon>
        <taxon>Pleosporales</taxon>
        <taxon>Pleosporineae</taxon>
        <taxon>Pleosporaceae</taxon>
        <taxon>Bipolaris</taxon>
    </lineage>
</organism>
<comment type="function">
    <text evidence="3 4 8">L-ornithine N(5)-monooxygenase; part of the gene cluster that mediates the biosynthesis of hydroxamate-containing siderophores that play a critical role in virulence (PubMed:23980626). Cochliobolus heterostrophus produces extracellular coprogen-type siderophores including coprogen, neocoprogen I and neocoprogen II, as well as the intracellular siderophore ferricrocin (PubMed:17056706). The role of extracellular siderophores is to supply iron to their producers in planta and the intracellular ferricrocin is required for intracellular iron distribution and storage with a crucial role in ascus and ascospore development (PubMed:17056706, PubMed:17601875). SIDA2 catalyzes the conversion of L-ornithine to N(5)-hydroxyornithine, the first step in the biosynthesis of all hydroxamate-containing siderophores (PubMed:23980626). The assembly of extracellular coprogen-type siderophores is then performed by the nonribosomal peptide synthetase (NRPS) NPS6 whereas the intracellular siderophore ferricrocin is assembled by NPS2 (PubMed:17056706, PubMed:17601875).</text>
</comment>
<comment type="catalytic activity">
    <reaction evidence="1">
        <text>L-ornithine + NADPH + O2 = N(5)-hydroxy-L-ornithine + NADP(+) + H2O</text>
        <dbReference type="Rhea" id="RHEA:41508"/>
        <dbReference type="ChEBI" id="CHEBI:15377"/>
        <dbReference type="ChEBI" id="CHEBI:15379"/>
        <dbReference type="ChEBI" id="CHEBI:46911"/>
        <dbReference type="ChEBI" id="CHEBI:57783"/>
        <dbReference type="ChEBI" id="CHEBI:58349"/>
        <dbReference type="ChEBI" id="CHEBI:78275"/>
        <dbReference type="EC" id="1.14.13.196"/>
    </reaction>
</comment>
<comment type="catalytic activity">
    <reaction evidence="1">
        <text>L-ornithine + NADH + O2 = N(5)-hydroxy-L-ornithine + NAD(+) + H2O</text>
        <dbReference type="Rhea" id="RHEA:41512"/>
        <dbReference type="ChEBI" id="CHEBI:15377"/>
        <dbReference type="ChEBI" id="CHEBI:15379"/>
        <dbReference type="ChEBI" id="CHEBI:46911"/>
        <dbReference type="ChEBI" id="CHEBI:57540"/>
        <dbReference type="ChEBI" id="CHEBI:57945"/>
        <dbReference type="ChEBI" id="CHEBI:78275"/>
        <dbReference type="EC" id="1.14.13.196"/>
    </reaction>
</comment>
<comment type="cofactor">
    <cofactor evidence="1">
        <name>FAD</name>
        <dbReference type="ChEBI" id="CHEBI:57692"/>
    </cofactor>
    <text evidence="1">Binds 1 FAD per subunit.</text>
</comment>
<comment type="pathway">
    <text evidence="8">Siderophore biosynthesis.</text>
</comment>
<comment type="subunit">
    <text evidence="1">Homotetramer.</text>
</comment>
<comment type="induction">
    <text evidence="5">Expression is repressed by the transcription repressor SRE1 under iron replete conditions (PubMed:23980626).</text>
</comment>
<comment type="similarity">
    <text evidence="7">Belongs to the lysine N(6)-hydroxylase/L-ornithine N(5)-oxygenase family.</text>
</comment>
<keyword id="KW-0274">FAD</keyword>
<keyword id="KW-0285">Flavoprotein</keyword>
<keyword id="KW-0503">Monooxygenase</keyword>
<keyword id="KW-0521">NADP</keyword>
<keyword id="KW-0560">Oxidoreductase</keyword>
<protein>
    <recommendedName>
        <fullName evidence="6">L-ornithine N(5)-monooxygenase</fullName>
        <shortName evidence="2">OMO</shortName>
        <ecNumber evidence="5">1.14.13.196</ecNumber>
    </recommendedName>
    <alternativeName>
        <fullName evidence="6">L-ornithine N(5)-oxygenase</fullName>
    </alternativeName>
    <alternativeName>
        <fullName evidence="6">Siderophore biosynthesis cluster protein A2</fullName>
    </alternativeName>
</protein>
<name>SIDA2_COCH4</name>
<feature type="chain" id="PRO_0000444391" description="L-ornithine N(5)-monooxygenase">
    <location>
        <begin position="1"/>
        <end position="529"/>
    </location>
</feature>
<feature type="binding site" evidence="1">
    <location>
        <begin position="100"/>
        <end position="108"/>
    </location>
    <ligand>
        <name>FAD</name>
        <dbReference type="ChEBI" id="CHEBI:57692"/>
    </ligand>
</feature>
<feature type="binding site" evidence="1">
    <location>
        <position position="119"/>
    </location>
    <ligand>
        <name>FAD</name>
        <dbReference type="ChEBI" id="CHEBI:57692"/>
    </ligand>
</feature>
<feature type="binding site" evidence="1">
    <location>
        <position position="124"/>
    </location>
    <ligand>
        <name>substrate</name>
    </ligand>
</feature>
<feature type="binding site" evidence="1">
    <location>
        <position position="185"/>
    </location>
    <ligand>
        <name>FAD</name>
        <dbReference type="ChEBI" id="CHEBI:57692"/>
    </ligand>
</feature>
<feature type="binding site" evidence="1">
    <location>
        <begin position="270"/>
        <end position="273"/>
    </location>
    <ligand>
        <name>NADP(+)</name>
        <dbReference type="ChEBI" id="CHEBI:58349"/>
    </ligand>
</feature>
<feature type="binding site" evidence="1">
    <location>
        <begin position="309"/>
        <end position="312"/>
    </location>
    <ligand>
        <name>substrate</name>
    </ligand>
</feature>
<feature type="binding site" evidence="1">
    <location>
        <begin position="339"/>
        <end position="341"/>
    </location>
    <ligand>
        <name>NADP(+)</name>
        <dbReference type="ChEBI" id="CHEBI:58349"/>
    </ligand>
</feature>
<feature type="binding site" evidence="1">
    <location>
        <position position="339"/>
    </location>
    <ligand>
        <name>substrate</name>
    </ligand>
</feature>
<feature type="binding site" evidence="1">
    <location>
        <begin position="493"/>
        <end position="495"/>
    </location>
    <ligand>
        <name>FAD</name>
        <dbReference type="ChEBI" id="CHEBI:57692"/>
    </ligand>
</feature>
<feature type="binding site" evidence="1">
    <location>
        <position position="496"/>
    </location>
    <ligand>
        <name>substrate</name>
    </ligand>
</feature>